<reference key="1">
    <citation type="journal article" date="2013" name="Nature">
        <title>The zebrafish reference genome sequence and its relationship to the human genome.</title>
        <authorList>
            <person name="Howe K."/>
            <person name="Clark M.D."/>
            <person name="Torroja C.F."/>
            <person name="Torrance J."/>
            <person name="Berthelot C."/>
            <person name="Muffato M."/>
            <person name="Collins J.E."/>
            <person name="Humphray S."/>
            <person name="McLaren K."/>
            <person name="Matthews L."/>
            <person name="McLaren S."/>
            <person name="Sealy I."/>
            <person name="Caccamo M."/>
            <person name="Churcher C."/>
            <person name="Scott C."/>
            <person name="Barrett J.C."/>
            <person name="Koch R."/>
            <person name="Rauch G.J."/>
            <person name="White S."/>
            <person name="Chow W."/>
            <person name="Kilian B."/>
            <person name="Quintais L.T."/>
            <person name="Guerra-Assuncao J.A."/>
            <person name="Zhou Y."/>
            <person name="Gu Y."/>
            <person name="Yen J."/>
            <person name="Vogel J.H."/>
            <person name="Eyre T."/>
            <person name="Redmond S."/>
            <person name="Banerjee R."/>
            <person name="Chi J."/>
            <person name="Fu B."/>
            <person name="Langley E."/>
            <person name="Maguire S.F."/>
            <person name="Laird G.K."/>
            <person name="Lloyd D."/>
            <person name="Kenyon E."/>
            <person name="Donaldson S."/>
            <person name="Sehra H."/>
            <person name="Almeida-King J."/>
            <person name="Loveland J."/>
            <person name="Trevanion S."/>
            <person name="Jones M."/>
            <person name="Quail M."/>
            <person name="Willey D."/>
            <person name="Hunt A."/>
            <person name="Burton J."/>
            <person name="Sims S."/>
            <person name="McLay K."/>
            <person name="Plumb B."/>
            <person name="Davis J."/>
            <person name="Clee C."/>
            <person name="Oliver K."/>
            <person name="Clark R."/>
            <person name="Riddle C."/>
            <person name="Elliot D."/>
            <person name="Threadgold G."/>
            <person name="Harden G."/>
            <person name="Ware D."/>
            <person name="Begum S."/>
            <person name="Mortimore B."/>
            <person name="Kerry G."/>
            <person name="Heath P."/>
            <person name="Phillimore B."/>
            <person name="Tracey A."/>
            <person name="Corby N."/>
            <person name="Dunn M."/>
            <person name="Johnson C."/>
            <person name="Wood J."/>
            <person name="Clark S."/>
            <person name="Pelan S."/>
            <person name="Griffiths G."/>
            <person name="Smith M."/>
            <person name="Glithero R."/>
            <person name="Howden P."/>
            <person name="Barker N."/>
            <person name="Lloyd C."/>
            <person name="Stevens C."/>
            <person name="Harley J."/>
            <person name="Holt K."/>
            <person name="Panagiotidis G."/>
            <person name="Lovell J."/>
            <person name="Beasley H."/>
            <person name="Henderson C."/>
            <person name="Gordon D."/>
            <person name="Auger K."/>
            <person name="Wright D."/>
            <person name="Collins J."/>
            <person name="Raisen C."/>
            <person name="Dyer L."/>
            <person name="Leung K."/>
            <person name="Robertson L."/>
            <person name="Ambridge K."/>
            <person name="Leongamornlert D."/>
            <person name="McGuire S."/>
            <person name="Gilderthorp R."/>
            <person name="Griffiths C."/>
            <person name="Manthravadi D."/>
            <person name="Nichol S."/>
            <person name="Barker G."/>
            <person name="Whitehead S."/>
            <person name="Kay M."/>
            <person name="Brown J."/>
            <person name="Murnane C."/>
            <person name="Gray E."/>
            <person name="Humphries M."/>
            <person name="Sycamore N."/>
            <person name="Barker D."/>
            <person name="Saunders D."/>
            <person name="Wallis J."/>
            <person name="Babbage A."/>
            <person name="Hammond S."/>
            <person name="Mashreghi-Mohammadi M."/>
            <person name="Barr L."/>
            <person name="Martin S."/>
            <person name="Wray P."/>
            <person name="Ellington A."/>
            <person name="Matthews N."/>
            <person name="Ellwood M."/>
            <person name="Woodmansey R."/>
            <person name="Clark G."/>
            <person name="Cooper J."/>
            <person name="Tromans A."/>
            <person name="Grafham D."/>
            <person name="Skuce C."/>
            <person name="Pandian R."/>
            <person name="Andrews R."/>
            <person name="Harrison E."/>
            <person name="Kimberley A."/>
            <person name="Garnett J."/>
            <person name="Fosker N."/>
            <person name="Hall R."/>
            <person name="Garner P."/>
            <person name="Kelly D."/>
            <person name="Bird C."/>
            <person name="Palmer S."/>
            <person name="Gehring I."/>
            <person name="Berger A."/>
            <person name="Dooley C.M."/>
            <person name="Ersan-Urun Z."/>
            <person name="Eser C."/>
            <person name="Geiger H."/>
            <person name="Geisler M."/>
            <person name="Karotki L."/>
            <person name="Kirn A."/>
            <person name="Konantz J."/>
            <person name="Konantz M."/>
            <person name="Oberlander M."/>
            <person name="Rudolph-Geiger S."/>
            <person name="Teucke M."/>
            <person name="Lanz C."/>
            <person name="Raddatz G."/>
            <person name="Osoegawa K."/>
            <person name="Zhu B."/>
            <person name="Rapp A."/>
            <person name="Widaa S."/>
            <person name="Langford C."/>
            <person name="Yang F."/>
            <person name="Schuster S.C."/>
            <person name="Carter N.P."/>
            <person name="Harrow J."/>
            <person name="Ning Z."/>
            <person name="Herrero J."/>
            <person name="Searle S.M."/>
            <person name="Enright A."/>
            <person name="Geisler R."/>
            <person name="Plasterk R.H."/>
            <person name="Lee C."/>
            <person name="Westerfield M."/>
            <person name="de Jong P.J."/>
            <person name="Zon L.I."/>
            <person name="Postlethwait J.H."/>
            <person name="Nusslein-Volhard C."/>
            <person name="Hubbard T.J."/>
            <person name="Roest Crollius H."/>
            <person name="Rogers J."/>
            <person name="Stemple D.L."/>
        </authorList>
    </citation>
    <scope>NUCLEOTIDE SEQUENCE [LARGE SCALE GENOMIC DNA]</scope>
    <source>
        <strain>Tuebingen</strain>
    </source>
</reference>
<gene>
    <name type="primary">slc25a25b</name>
    <name type="synonym">scamc2b</name>
    <name type="ORF">si:dkey-7o20.1</name>
</gene>
<accession>A2CEQ0</accession>
<keyword id="KW-0106">Calcium</keyword>
<keyword id="KW-0472">Membrane</keyword>
<keyword id="KW-0479">Metal-binding</keyword>
<keyword id="KW-0496">Mitochondrion</keyword>
<keyword id="KW-0999">Mitochondrion inner membrane</keyword>
<keyword id="KW-1185">Reference proteome</keyword>
<keyword id="KW-0677">Repeat</keyword>
<keyword id="KW-0812">Transmembrane</keyword>
<keyword id="KW-1133">Transmembrane helix</keyword>
<keyword id="KW-0813">Transport</keyword>
<protein>
    <recommendedName>
        <fullName>Calcium-binding mitochondrial carrier protein SCaMC-2-B</fullName>
    </recommendedName>
    <alternativeName>
        <fullName>Small calcium-binding mitochondrial carrier protein 2-B</fullName>
    </alternativeName>
    <alternativeName>
        <fullName>Solute carrier family 25 member 25-B</fullName>
    </alternativeName>
</protein>
<dbReference type="EMBL" id="CR387979">
    <property type="status" value="NOT_ANNOTATED_CDS"/>
    <property type="molecule type" value="Genomic_DNA"/>
</dbReference>
<dbReference type="EMBL" id="CR749745">
    <property type="protein sequence ID" value="CAM16394.1"/>
    <property type="molecule type" value="Genomic_DNA"/>
</dbReference>
<dbReference type="RefSeq" id="NP_001153492.1">
    <property type="nucleotide sequence ID" value="NM_001160020.1"/>
</dbReference>
<dbReference type="SMR" id="A2CEQ0"/>
<dbReference type="FunCoup" id="A2CEQ0">
    <property type="interactions" value="2239"/>
</dbReference>
<dbReference type="STRING" id="7955.ENSDARP00000088935"/>
<dbReference type="PaxDb" id="7955-ENSDARP00000088935"/>
<dbReference type="PeptideAtlas" id="A2CEQ0"/>
<dbReference type="Ensembl" id="ENSDART00000043010">
    <property type="protein sequence ID" value="ENSDARP00000043009"/>
    <property type="gene ID" value="ENSDARG00000035468"/>
</dbReference>
<dbReference type="GeneID" id="569227"/>
<dbReference type="KEGG" id="dre:569227"/>
<dbReference type="AGR" id="ZFIN:ZDB-GENE-060526-340"/>
<dbReference type="CTD" id="569227"/>
<dbReference type="ZFIN" id="ZDB-GENE-060526-340">
    <property type="gene designation" value="slc25a25b"/>
</dbReference>
<dbReference type="eggNOG" id="KOG0036">
    <property type="taxonomic scope" value="Eukaryota"/>
</dbReference>
<dbReference type="HOGENOM" id="CLU_015166_2_0_1"/>
<dbReference type="InParanoid" id="A2CEQ0"/>
<dbReference type="OMA" id="VISYAEW"/>
<dbReference type="OrthoDB" id="270584at2759"/>
<dbReference type="PhylomeDB" id="A2CEQ0"/>
<dbReference type="PRO" id="PR:A2CEQ0"/>
<dbReference type="Proteomes" id="UP000000437">
    <property type="component" value="Alternate scaffold 5"/>
</dbReference>
<dbReference type="Proteomes" id="UP000000437">
    <property type="component" value="Chromosome 5"/>
</dbReference>
<dbReference type="Bgee" id="ENSDARG00000035468">
    <property type="expression patterns" value="Expressed in retina and 21 other cell types or tissues"/>
</dbReference>
<dbReference type="ExpressionAtlas" id="A2CEQ0">
    <property type="expression patterns" value="baseline"/>
</dbReference>
<dbReference type="GO" id="GO:0005743">
    <property type="term" value="C:mitochondrial inner membrane"/>
    <property type="evidence" value="ECO:0007669"/>
    <property type="project" value="UniProtKB-SubCell"/>
</dbReference>
<dbReference type="GO" id="GO:0005347">
    <property type="term" value="F:ATP transmembrane transporter activity"/>
    <property type="evidence" value="ECO:0000318"/>
    <property type="project" value="GO_Central"/>
</dbReference>
<dbReference type="GO" id="GO:0005509">
    <property type="term" value="F:calcium ion binding"/>
    <property type="evidence" value="ECO:0007669"/>
    <property type="project" value="InterPro"/>
</dbReference>
<dbReference type="GO" id="GO:0015866">
    <property type="term" value="P:ADP transport"/>
    <property type="evidence" value="ECO:0000318"/>
    <property type="project" value="GO_Central"/>
</dbReference>
<dbReference type="GO" id="GO:0015867">
    <property type="term" value="P:ATP transport"/>
    <property type="evidence" value="ECO:0000318"/>
    <property type="project" value="GO_Central"/>
</dbReference>
<dbReference type="GO" id="GO:0060972">
    <property type="term" value="P:left/right pattern formation"/>
    <property type="evidence" value="ECO:0000315"/>
    <property type="project" value="ZFIN"/>
</dbReference>
<dbReference type="CDD" id="cd00051">
    <property type="entry name" value="EFh"/>
    <property type="match status" value="1"/>
</dbReference>
<dbReference type="FunFam" id="1.10.238.10:FF:000028">
    <property type="entry name" value="Putative calcium-binding mitochondrial carrier protein scamc-2"/>
    <property type="match status" value="1"/>
</dbReference>
<dbReference type="FunFam" id="1.50.40.10:FF:000003">
    <property type="entry name" value="Putative calcium-binding mitochondrial carrier protein scamc-2"/>
    <property type="match status" value="1"/>
</dbReference>
<dbReference type="Gene3D" id="1.10.238.10">
    <property type="entry name" value="EF-hand"/>
    <property type="match status" value="2"/>
</dbReference>
<dbReference type="Gene3D" id="1.50.40.10">
    <property type="entry name" value="Mitochondrial carrier domain"/>
    <property type="match status" value="1"/>
</dbReference>
<dbReference type="InterPro" id="IPR011992">
    <property type="entry name" value="EF-hand-dom_pair"/>
</dbReference>
<dbReference type="InterPro" id="IPR002048">
    <property type="entry name" value="EF_hand_dom"/>
</dbReference>
<dbReference type="InterPro" id="IPR002167">
    <property type="entry name" value="GDC-like"/>
</dbReference>
<dbReference type="InterPro" id="IPR002067">
    <property type="entry name" value="Mit_carrier"/>
</dbReference>
<dbReference type="InterPro" id="IPR018108">
    <property type="entry name" value="Mitochondrial_sb/sol_carrier"/>
</dbReference>
<dbReference type="InterPro" id="IPR023395">
    <property type="entry name" value="Mt_carrier_dom_sf"/>
</dbReference>
<dbReference type="PANTHER" id="PTHR24089">
    <property type="entry name" value="SOLUTE CARRIER FAMILY 25"/>
    <property type="match status" value="1"/>
</dbReference>
<dbReference type="Pfam" id="PF13499">
    <property type="entry name" value="EF-hand_7"/>
    <property type="match status" value="1"/>
</dbReference>
<dbReference type="Pfam" id="PF00153">
    <property type="entry name" value="Mito_carr"/>
    <property type="match status" value="3"/>
</dbReference>
<dbReference type="PRINTS" id="PR00928">
    <property type="entry name" value="GRAVESDC"/>
</dbReference>
<dbReference type="PRINTS" id="PR00926">
    <property type="entry name" value="MITOCARRIER"/>
</dbReference>
<dbReference type="SUPFAM" id="SSF47473">
    <property type="entry name" value="EF-hand"/>
    <property type="match status" value="1"/>
</dbReference>
<dbReference type="SUPFAM" id="SSF103506">
    <property type="entry name" value="Mitochondrial carrier"/>
    <property type="match status" value="1"/>
</dbReference>
<dbReference type="PROSITE" id="PS50222">
    <property type="entry name" value="EF_HAND_2"/>
    <property type="match status" value="3"/>
</dbReference>
<dbReference type="PROSITE" id="PS50920">
    <property type="entry name" value="SOLCAR"/>
    <property type="match status" value="3"/>
</dbReference>
<name>SCM2B_DANRE</name>
<organism>
    <name type="scientific">Danio rerio</name>
    <name type="common">Zebrafish</name>
    <name type="synonym">Brachydanio rerio</name>
    <dbReference type="NCBI Taxonomy" id="7955"/>
    <lineage>
        <taxon>Eukaryota</taxon>
        <taxon>Metazoa</taxon>
        <taxon>Chordata</taxon>
        <taxon>Craniata</taxon>
        <taxon>Vertebrata</taxon>
        <taxon>Euteleostomi</taxon>
        <taxon>Actinopterygii</taxon>
        <taxon>Neopterygii</taxon>
        <taxon>Teleostei</taxon>
        <taxon>Ostariophysi</taxon>
        <taxon>Cypriniformes</taxon>
        <taxon>Danionidae</taxon>
        <taxon>Danioninae</taxon>
        <taxon>Danio</taxon>
    </lineage>
</organism>
<sequence>MLCLCLYVPVHISERTEFEYFESESLPVQLKSLFKLSLFLPSQEFDSYRKWRKKVVKAGDKDLDGQLDFEEFVHYLRDHEKKLRLVFKSLDKKNDGHIDSQEIMQSLRDLGVHISEEQAEKILKSMDKNGTMTIDWNEWRDYHLLHPAENIPEIILYWKHSTIFDVGESMLVPDEFTAEEKNTGMWWRHLVAGGGAGAVSRTCTAPLDRLKVLMQVHATRSNSMGIAGGFTQMIREGGLRSLWRGNGINVLKIAPESAIKFMAYEQIKRLIGSNQETLGILERLVSGSLAGAIAQSSIYPMEVLKTRLALGRTGQYSGIADCAKHIFKKEGMTAFYKGYIPNMLGIIPYAGIDLAVYETLKNSWLQRFATDSADPGVFVLLACGTMSSTCGQLASYPLALVRTRMQAQASQEGSPQMTMSGLFRHIVRTEGAIGLYRGLAPNFMKVIPAVSISYVVYENLKITLGVQSR</sequence>
<feature type="chain" id="PRO_0000317606" description="Calcium-binding mitochondrial carrier protein SCaMC-2-B">
    <location>
        <begin position="1"/>
        <end position="469"/>
    </location>
</feature>
<feature type="topological domain" description="Mitochondrial intermembrane" evidence="2">
    <location>
        <begin position="1"/>
        <end position="189"/>
    </location>
</feature>
<feature type="transmembrane region" description="Helical; Name=1" evidence="2">
    <location>
        <begin position="190"/>
        <end position="207"/>
    </location>
</feature>
<feature type="topological domain" description="Mitochondrial matrix" evidence="2">
    <location>
        <begin position="208"/>
        <end position="244"/>
    </location>
</feature>
<feature type="transmembrane region" description="Helical; Name=2" evidence="2">
    <location>
        <begin position="245"/>
        <end position="264"/>
    </location>
</feature>
<feature type="topological domain" description="Mitochondrial intermembrane" evidence="2">
    <location>
        <begin position="265"/>
        <end position="287"/>
    </location>
</feature>
<feature type="transmembrane region" description="Helical; Name=3" evidence="2">
    <location>
        <begin position="288"/>
        <end position="301"/>
    </location>
</feature>
<feature type="topological domain" description="Mitochondrial matrix" evidence="2">
    <location>
        <begin position="302"/>
        <end position="337"/>
    </location>
</feature>
<feature type="transmembrane region" description="Helical; Name=4" evidence="2">
    <location>
        <begin position="338"/>
        <end position="357"/>
    </location>
</feature>
<feature type="topological domain" description="Mitochondrial intermembrane" evidence="2">
    <location>
        <begin position="358"/>
        <end position="380"/>
    </location>
</feature>
<feature type="transmembrane region" description="Helical; Name=5" evidence="2">
    <location>
        <begin position="381"/>
        <end position="398"/>
    </location>
</feature>
<feature type="topological domain" description="Mitochondrial matrix" evidence="2">
    <location>
        <begin position="399"/>
        <end position="437"/>
    </location>
</feature>
<feature type="transmembrane region" description="Helical; Name=6" evidence="2">
    <location>
        <begin position="438"/>
        <end position="457"/>
    </location>
</feature>
<feature type="topological domain" description="Mitochondrial intermembrane" evidence="2">
    <location>
        <begin position="458"/>
        <end position="469"/>
    </location>
</feature>
<feature type="domain" description="EF-hand 1" evidence="3">
    <location>
        <begin position="47"/>
        <end position="80"/>
    </location>
</feature>
<feature type="domain" description="EF-hand 2" evidence="3">
    <location>
        <begin position="78"/>
        <end position="113"/>
    </location>
</feature>
<feature type="domain" description="EF-hand 3" evidence="3">
    <location>
        <begin position="114"/>
        <end position="149"/>
    </location>
</feature>
<feature type="repeat" description="Solcar 1">
    <location>
        <begin position="184"/>
        <end position="270"/>
    </location>
</feature>
<feature type="repeat" description="Solcar 2">
    <location>
        <begin position="278"/>
        <end position="363"/>
    </location>
</feature>
<feature type="repeat" description="Solcar 3">
    <location>
        <begin position="375"/>
        <end position="463"/>
    </location>
</feature>
<feature type="binding site" evidence="4">
    <location>
        <position position="60"/>
    </location>
    <ligand>
        <name>Ca(2+)</name>
        <dbReference type="ChEBI" id="CHEBI:29108"/>
    </ligand>
</feature>
<feature type="binding site" evidence="4">
    <location>
        <position position="62"/>
    </location>
    <ligand>
        <name>Ca(2+)</name>
        <dbReference type="ChEBI" id="CHEBI:29108"/>
    </ligand>
</feature>
<feature type="binding site" evidence="4">
    <location>
        <position position="64"/>
    </location>
    <ligand>
        <name>Ca(2+)</name>
        <dbReference type="ChEBI" id="CHEBI:29108"/>
    </ligand>
</feature>
<feature type="binding site" evidence="4">
    <location>
        <position position="66"/>
    </location>
    <ligand>
        <name>Ca(2+)</name>
        <dbReference type="ChEBI" id="CHEBI:29108"/>
    </ligand>
</feature>
<feature type="binding site" evidence="4">
    <location>
        <position position="71"/>
    </location>
    <ligand>
        <name>Ca(2+)</name>
        <dbReference type="ChEBI" id="CHEBI:29108"/>
    </ligand>
</feature>
<comment type="function">
    <text evidence="1">Calcium-dependent mitochondrial solute carrier.</text>
</comment>
<comment type="subcellular location">
    <subcellularLocation>
        <location evidence="1">Mitochondrion inner membrane</location>
        <topology evidence="1">Multi-pass membrane protein</topology>
    </subcellularLocation>
</comment>
<comment type="similarity">
    <text evidence="4">Belongs to the mitochondrial carrier (TC 2.A.29) family.</text>
</comment>
<evidence type="ECO:0000250" key="1"/>
<evidence type="ECO:0000255" key="2"/>
<evidence type="ECO:0000255" key="3">
    <source>
        <dbReference type="PROSITE-ProRule" id="PRU00448"/>
    </source>
</evidence>
<evidence type="ECO:0000305" key="4"/>
<proteinExistence type="inferred from homology"/>